<sequence length="170" mass="18494">MMNRVILVGRLTKDPDLRYTPNGVAVATFTLAVNRAFANQQGEREADFINCVIWRKQAENVANYLKKGSLAGVDGRLQTRNYEGQDGKRVYVTEVLAESVQFLEPRNGGGEQRGSFNQQPSGAGFGNQGSNPFGQSSNSGNQGNSGFTKNDDPFSNVGQPIDISDDDLPF</sequence>
<feature type="chain" id="PRO_0000096003" description="Single-stranded DNA-binding protein">
    <location>
        <begin position="1"/>
        <end position="170"/>
    </location>
</feature>
<feature type="domain" description="SSB" evidence="1">
    <location>
        <begin position="2"/>
        <end position="104"/>
    </location>
</feature>
<feature type="region of interest" description="Disordered" evidence="2">
    <location>
        <begin position="104"/>
        <end position="170"/>
    </location>
</feature>
<feature type="short sequence motif" description="Important for interaction with partner proteins" evidence="1">
    <location>
        <begin position="165"/>
        <end position="170"/>
    </location>
</feature>
<feature type="compositionally biased region" description="Low complexity" evidence="2">
    <location>
        <begin position="128"/>
        <end position="146"/>
    </location>
</feature>
<comment type="function">
    <text evidence="1">Plays an important role in DNA replication, recombination and repair. Binds to ssDNA and to an array of partner proteins to recruit them to their sites of action during DNA metabolism.</text>
</comment>
<comment type="subunit">
    <text evidence="1">Homotetramer.</text>
</comment>
<dbReference type="EMBL" id="AE016877">
    <property type="protein sequence ID" value="AAP12329.1"/>
    <property type="molecule type" value="Genomic_DNA"/>
</dbReference>
<dbReference type="RefSeq" id="NP_835128.1">
    <property type="nucleotide sequence ID" value="NC_004722.1"/>
</dbReference>
<dbReference type="RefSeq" id="WP_000981966.1">
    <property type="nucleotide sequence ID" value="NZ_CP138336.1"/>
</dbReference>
<dbReference type="SMR" id="Q814G6"/>
<dbReference type="STRING" id="226900.BC_5475"/>
<dbReference type="GeneID" id="69534486"/>
<dbReference type="KEGG" id="bce:BC5475"/>
<dbReference type="PATRIC" id="fig|226900.8.peg.5653"/>
<dbReference type="HOGENOM" id="CLU_078758_6_2_9"/>
<dbReference type="OrthoDB" id="9809878at2"/>
<dbReference type="Proteomes" id="UP000001417">
    <property type="component" value="Chromosome"/>
</dbReference>
<dbReference type="GO" id="GO:0009295">
    <property type="term" value="C:nucleoid"/>
    <property type="evidence" value="ECO:0000318"/>
    <property type="project" value="GO_Central"/>
</dbReference>
<dbReference type="GO" id="GO:0008047">
    <property type="term" value="F:enzyme activator activity"/>
    <property type="evidence" value="ECO:0000318"/>
    <property type="project" value="GO_Central"/>
</dbReference>
<dbReference type="GO" id="GO:0003697">
    <property type="term" value="F:single-stranded DNA binding"/>
    <property type="evidence" value="ECO:0000318"/>
    <property type="project" value="GO_Central"/>
</dbReference>
<dbReference type="GO" id="GO:0006310">
    <property type="term" value="P:DNA recombination"/>
    <property type="evidence" value="ECO:0007669"/>
    <property type="project" value="UniProtKB-UniRule"/>
</dbReference>
<dbReference type="GO" id="GO:0006281">
    <property type="term" value="P:DNA repair"/>
    <property type="evidence" value="ECO:0007669"/>
    <property type="project" value="UniProtKB-UniRule"/>
</dbReference>
<dbReference type="GO" id="GO:0006260">
    <property type="term" value="P:DNA replication"/>
    <property type="evidence" value="ECO:0000318"/>
    <property type="project" value="GO_Central"/>
</dbReference>
<dbReference type="CDD" id="cd04496">
    <property type="entry name" value="SSB_OBF"/>
    <property type="match status" value="1"/>
</dbReference>
<dbReference type="FunFam" id="2.40.50.140:FF:000084">
    <property type="entry name" value="Single-stranded DNA-binding protein"/>
    <property type="match status" value="1"/>
</dbReference>
<dbReference type="Gene3D" id="2.40.50.140">
    <property type="entry name" value="Nucleic acid-binding proteins"/>
    <property type="match status" value="1"/>
</dbReference>
<dbReference type="HAMAP" id="MF_00984">
    <property type="entry name" value="SSB"/>
    <property type="match status" value="1"/>
</dbReference>
<dbReference type="InterPro" id="IPR012340">
    <property type="entry name" value="NA-bd_OB-fold"/>
</dbReference>
<dbReference type="InterPro" id="IPR000424">
    <property type="entry name" value="Primosome_PriB/ssb"/>
</dbReference>
<dbReference type="InterPro" id="IPR011344">
    <property type="entry name" value="ssDNA-bd"/>
</dbReference>
<dbReference type="NCBIfam" id="NF005241">
    <property type="entry name" value="PRK06751.1"/>
    <property type="match status" value="1"/>
</dbReference>
<dbReference type="NCBIfam" id="TIGR00621">
    <property type="entry name" value="ssb"/>
    <property type="match status" value="1"/>
</dbReference>
<dbReference type="PANTHER" id="PTHR10302">
    <property type="entry name" value="SINGLE-STRANDED DNA-BINDING PROTEIN"/>
    <property type="match status" value="1"/>
</dbReference>
<dbReference type="PANTHER" id="PTHR10302:SF27">
    <property type="entry name" value="SINGLE-STRANDED DNA-BINDING PROTEIN"/>
    <property type="match status" value="1"/>
</dbReference>
<dbReference type="Pfam" id="PF00436">
    <property type="entry name" value="SSB"/>
    <property type="match status" value="1"/>
</dbReference>
<dbReference type="SUPFAM" id="SSF50249">
    <property type="entry name" value="Nucleic acid-binding proteins"/>
    <property type="match status" value="1"/>
</dbReference>
<dbReference type="PROSITE" id="PS50935">
    <property type="entry name" value="SSB"/>
    <property type="match status" value="1"/>
</dbReference>
<reference key="1">
    <citation type="journal article" date="2003" name="Nature">
        <title>Genome sequence of Bacillus cereus and comparative analysis with Bacillus anthracis.</title>
        <authorList>
            <person name="Ivanova N."/>
            <person name="Sorokin A."/>
            <person name="Anderson I."/>
            <person name="Galleron N."/>
            <person name="Candelon B."/>
            <person name="Kapatral V."/>
            <person name="Bhattacharyya A."/>
            <person name="Reznik G."/>
            <person name="Mikhailova N."/>
            <person name="Lapidus A."/>
            <person name="Chu L."/>
            <person name="Mazur M."/>
            <person name="Goltsman E."/>
            <person name="Larsen N."/>
            <person name="D'Souza M."/>
            <person name="Walunas T."/>
            <person name="Grechkin Y."/>
            <person name="Pusch G."/>
            <person name="Haselkorn R."/>
            <person name="Fonstein M."/>
            <person name="Ehrlich S.D."/>
            <person name="Overbeek R."/>
            <person name="Kyrpides N.C."/>
        </authorList>
    </citation>
    <scope>NUCLEOTIDE SEQUENCE [LARGE SCALE GENOMIC DNA]</scope>
    <source>
        <strain>ATCC 14579 / DSM 31 / CCUG 7414 / JCM 2152 / NBRC 15305 / NCIMB 9373 / NCTC 2599 / NRRL B-3711</strain>
    </source>
</reference>
<evidence type="ECO:0000255" key="1">
    <source>
        <dbReference type="HAMAP-Rule" id="MF_00984"/>
    </source>
</evidence>
<evidence type="ECO:0000256" key="2">
    <source>
        <dbReference type="SAM" id="MobiDB-lite"/>
    </source>
</evidence>
<protein>
    <recommendedName>
        <fullName evidence="1">Single-stranded DNA-binding protein</fullName>
        <shortName evidence="1">SSB</shortName>
    </recommendedName>
</protein>
<gene>
    <name type="primary">ssb</name>
    <name type="ordered locus">BC_5475</name>
</gene>
<keyword id="KW-0227">DNA damage</keyword>
<keyword id="KW-0233">DNA recombination</keyword>
<keyword id="KW-0234">DNA repair</keyword>
<keyword id="KW-0235">DNA replication</keyword>
<keyword id="KW-0238">DNA-binding</keyword>
<keyword id="KW-1185">Reference proteome</keyword>
<name>SSB_BACCR</name>
<proteinExistence type="inferred from homology"/>
<organism>
    <name type="scientific">Bacillus cereus (strain ATCC 14579 / DSM 31 / CCUG 7414 / JCM 2152 / NBRC 15305 / NCIMB 9373 / NCTC 2599 / NRRL B-3711)</name>
    <dbReference type="NCBI Taxonomy" id="226900"/>
    <lineage>
        <taxon>Bacteria</taxon>
        <taxon>Bacillati</taxon>
        <taxon>Bacillota</taxon>
        <taxon>Bacilli</taxon>
        <taxon>Bacillales</taxon>
        <taxon>Bacillaceae</taxon>
        <taxon>Bacillus</taxon>
        <taxon>Bacillus cereus group</taxon>
    </lineage>
</organism>
<accession>Q814G6</accession>